<comment type="function">
    <text>PLA2 catalyzes the calcium-dependent hydrolysis of the 2-acyl groups in 3-sn-phosphoglycerides.</text>
</comment>
<comment type="catalytic activity">
    <reaction evidence="2 3">
        <text>a 1,2-diacyl-sn-glycero-3-phosphocholine + H2O = a 1-acyl-sn-glycero-3-phosphocholine + a fatty acid + H(+)</text>
        <dbReference type="Rhea" id="RHEA:15801"/>
        <dbReference type="ChEBI" id="CHEBI:15377"/>
        <dbReference type="ChEBI" id="CHEBI:15378"/>
        <dbReference type="ChEBI" id="CHEBI:28868"/>
        <dbReference type="ChEBI" id="CHEBI:57643"/>
        <dbReference type="ChEBI" id="CHEBI:58168"/>
        <dbReference type="EC" id="3.1.1.4"/>
    </reaction>
</comment>
<comment type="cofactor">
    <cofactor evidence="1">
        <name>Ca(2+)</name>
        <dbReference type="ChEBI" id="CHEBI:29108"/>
    </cofactor>
    <text evidence="1">Binds 1 Ca(2+) ion.</text>
</comment>
<comment type="subcellular location">
    <subcellularLocation>
        <location>Secreted</location>
    </subcellularLocation>
</comment>
<comment type="tissue specificity">
    <text>Expressed by the venom gland.</text>
</comment>
<comment type="similarity">
    <text evidence="4">Belongs to the phospholipase A2 family. Group II subfamily. D49 sub-subfamily.</text>
</comment>
<dbReference type="EC" id="3.1.1.4"/>
<dbReference type="PIR" id="S17860">
    <property type="entry name" value="S17860"/>
</dbReference>
<dbReference type="SMR" id="P24293"/>
<dbReference type="GO" id="GO:0005576">
    <property type="term" value="C:extracellular region"/>
    <property type="evidence" value="ECO:0007669"/>
    <property type="project" value="UniProtKB-SubCell"/>
</dbReference>
<dbReference type="GO" id="GO:0005509">
    <property type="term" value="F:calcium ion binding"/>
    <property type="evidence" value="ECO:0007669"/>
    <property type="project" value="InterPro"/>
</dbReference>
<dbReference type="GO" id="GO:0047498">
    <property type="term" value="F:calcium-dependent phospholipase A2 activity"/>
    <property type="evidence" value="ECO:0007669"/>
    <property type="project" value="TreeGrafter"/>
</dbReference>
<dbReference type="GO" id="GO:0005543">
    <property type="term" value="F:phospholipid binding"/>
    <property type="evidence" value="ECO:0007669"/>
    <property type="project" value="TreeGrafter"/>
</dbReference>
<dbReference type="GO" id="GO:0050482">
    <property type="term" value="P:arachidonate secretion"/>
    <property type="evidence" value="ECO:0007669"/>
    <property type="project" value="InterPro"/>
</dbReference>
<dbReference type="GO" id="GO:0016042">
    <property type="term" value="P:lipid catabolic process"/>
    <property type="evidence" value="ECO:0007669"/>
    <property type="project" value="UniProtKB-KW"/>
</dbReference>
<dbReference type="GO" id="GO:0006644">
    <property type="term" value="P:phospholipid metabolic process"/>
    <property type="evidence" value="ECO:0007669"/>
    <property type="project" value="InterPro"/>
</dbReference>
<dbReference type="CDD" id="cd00125">
    <property type="entry name" value="PLA2c"/>
    <property type="match status" value="1"/>
</dbReference>
<dbReference type="FunFam" id="1.20.90.10:FF:000001">
    <property type="entry name" value="Basic phospholipase A2 homolog"/>
    <property type="match status" value="1"/>
</dbReference>
<dbReference type="Gene3D" id="1.20.90.10">
    <property type="entry name" value="Phospholipase A2 domain"/>
    <property type="match status" value="1"/>
</dbReference>
<dbReference type="InterPro" id="IPR001211">
    <property type="entry name" value="PLipase_A2"/>
</dbReference>
<dbReference type="InterPro" id="IPR033112">
    <property type="entry name" value="PLipase_A2_Asp_AS"/>
</dbReference>
<dbReference type="InterPro" id="IPR016090">
    <property type="entry name" value="PLipase_A2_dom"/>
</dbReference>
<dbReference type="InterPro" id="IPR036444">
    <property type="entry name" value="PLipase_A2_dom_sf"/>
</dbReference>
<dbReference type="InterPro" id="IPR033113">
    <property type="entry name" value="PLipase_A2_His_AS"/>
</dbReference>
<dbReference type="PANTHER" id="PTHR11716:SF101">
    <property type="entry name" value="BASIC PHOSPHOLIPASE A2 PA-11-LIKE"/>
    <property type="match status" value="1"/>
</dbReference>
<dbReference type="PANTHER" id="PTHR11716">
    <property type="entry name" value="PHOSPHOLIPASE A2 FAMILY MEMBER"/>
    <property type="match status" value="1"/>
</dbReference>
<dbReference type="Pfam" id="PF00068">
    <property type="entry name" value="Phospholip_A2_1"/>
    <property type="match status" value="1"/>
</dbReference>
<dbReference type="PRINTS" id="PR00389">
    <property type="entry name" value="PHPHLIPASEA2"/>
</dbReference>
<dbReference type="SMART" id="SM00085">
    <property type="entry name" value="PA2c"/>
    <property type="match status" value="1"/>
</dbReference>
<dbReference type="SUPFAM" id="SSF48619">
    <property type="entry name" value="Phospholipase A2, PLA2"/>
    <property type="match status" value="1"/>
</dbReference>
<dbReference type="PROSITE" id="PS00119">
    <property type="entry name" value="PA2_ASP"/>
    <property type="match status" value="1"/>
</dbReference>
<dbReference type="PROSITE" id="PS00118">
    <property type="entry name" value="PA2_HIS"/>
    <property type="match status" value="1"/>
</dbReference>
<name>PA2A1_ERIMA</name>
<keyword id="KW-0106">Calcium</keyword>
<keyword id="KW-0903">Direct protein sequencing</keyword>
<keyword id="KW-1015">Disulfide bond</keyword>
<keyword id="KW-0378">Hydrolase</keyword>
<keyword id="KW-0442">Lipid degradation</keyword>
<keyword id="KW-0443">Lipid metabolism</keyword>
<keyword id="KW-0479">Metal-binding</keyword>
<keyword id="KW-0964">Secreted</keyword>
<proteinExistence type="evidence at protein level"/>
<protein>
    <recommendedName>
        <fullName>Acidic phospholipase A2 PLA-1</fullName>
        <shortName>svPLA2</shortName>
        <ecNumber>3.1.1.4</ecNumber>
    </recommendedName>
    <alternativeName>
        <fullName>Phosphatidylcholine 2-acylhydrolase</fullName>
    </alternativeName>
</protein>
<organism>
    <name type="scientific">Eristicophis macmahoni</name>
    <name type="common">Leaf-nosed viper</name>
    <dbReference type="NCBI Taxonomy" id="110227"/>
    <lineage>
        <taxon>Eukaryota</taxon>
        <taxon>Metazoa</taxon>
        <taxon>Chordata</taxon>
        <taxon>Craniata</taxon>
        <taxon>Vertebrata</taxon>
        <taxon>Euteleostomi</taxon>
        <taxon>Lepidosauria</taxon>
        <taxon>Squamata</taxon>
        <taxon>Bifurcata</taxon>
        <taxon>Unidentata</taxon>
        <taxon>Episquamata</taxon>
        <taxon>Toxicofera</taxon>
        <taxon>Serpentes</taxon>
        <taxon>Colubroidea</taxon>
        <taxon>Viperidae</taxon>
        <taxon>Viperinae</taxon>
        <taxon>Eristicophis</taxon>
    </lineage>
</organism>
<accession>P24293</accession>
<evidence type="ECO:0000250" key="1"/>
<evidence type="ECO:0000255" key="2">
    <source>
        <dbReference type="PROSITE-ProRule" id="PRU10035"/>
    </source>
</evidence>
<evidence type="ECO:0000255" key="3">
    <source>
        <dbReference type="PROSITE-ProRule" id="PRU10036"/>
    </source>
</evidence>
<evidence type="ECO:0000305" key="4"/>
<sequence>NLYQFGKMIFKMTGKSALLSYSDYGCYCGWGGKGKPLDATDRCCFVHDCCYGRVNGCNPKLSTYSYSFQNGDIVCGDDNACLRAVCECDRVAAICFGENLNTYDRKYKDYPSSQCTETEQC</sequence>
<feature type="chain" id="PRO_0000161645" description="Acidic phospholipase A2 PLA-1">
    <location>
        <begin position="1"/>
        <end position="121"/>
    </location>
</feature>
<feature type="active site" evidence="1">
    <location>
        <position position="47"/>
    </location>
</feature>
<feature type="active site" evidence="1">
    <location>
        <position position="89"/>
    </location>
</feature>
<feature type="binding site" evidence="1">
    <location>
        <position position="27"/>
    </location>
    <ligand>
        <name>Ca(2+)</name>
        <dbReference type="ChEBI" id="CHEBI:29108"/>
    </ligand>
</feature>
<feature type="binding site" evidence="1">
    <location>
        <position position="29"/>
    </location>
    <ligand>
        <name>Ca(2+)</name>
        <dbReference type="ChEBI" id="CHEBI:29108"/>
    </ligand>
</feature>
<feature type="binding site" evidence="1">
    <location>
        <position position="31"/>
    </location>
    <ligand>
        <name>Ca(2+)</name>
        <dbReference type="ChEBI" id="CHEBI:29108"/>
    </ligand>
</feature>
<feature type="binding site" evidence="1">
    <location>
        <position position="48"/>
    </location>
    <ligand>
        <name>Ca(2+)</name>
        <dbReference type="ChEBI" id="CHEBI:29108"/>
    </ligand>
</feature>
<feature type="disulfide bond" evidence="1">
    <location>
        <begin position="26"/>
        <end position="115"/>
    </location>
</feature>
<feature type="disulfide bond" evidence="1">
    <location>
        <begin position="28"/>
        <end position="44"/>
    </location>
</feature>
<feature type="disulfide bond" evidence="1">
    <location>
        <begin position="43"/>
        <end position="95"/>
    </location>
</feature>
<feature type="disulfide bond" evidence="1">
    <location>
        <begin position="49"/>
        <end position="121"/>
    </location>
</feature>
<feature type="disulfide bond" evidence="1">
    <location>
        <begin position="50"/>
        <end position="88"/>
    </location>
</feature>
<feature type="disulfide bond" evidence="1">
    <location>
        <begin position="57"/>
        <end position="81"/>
    </location>
</feature>
<feature type="disulfide bond" evidence="1">
    <location>
        <begin position="75"/>
        <end position="86"/>
    </location>
</feature>
<reference key="1">
    <citation type="journal article" date="1991" name="Eur. J. Biochem.">
        <title>Purification and characterization of two highly different group II phospholipase A2 isozymes from a single viperid (Eristocophis macmahoni) venom.</title>
        <authorList>
            <person name="Siddiqi A.R."/>
            <person name="Zaidi Z.H."/>
            <person name="Joernvall H."/>
        </authorList>
    </citation>
    <scope>PROTEIN SEQUENCE</scope>
    <source>
        <tissue>Venom</tissue>
    </source>
</reference>